<reference key="1">
    <citation type="journal article" date="1993" name="J. Bacteriol.">
        <title>Cloning and molecular analysis of genes affecting expression of binding substance, the recipient-encoded receptor(s) mediating mating aggregate formation in Enterococcus faecalis.</title>
        <authorList>
            <person name="Bensing B.A."/>
            <person name="Dunny G.M."/>
        </authorList>
    </citation>
    <scope>NUCLEOTIDE SEQUENCE [GENOMIC DNA]</scope>
    <source>
        <strain>OG1SSP</strain>
    </source>
</reference>
<reference key="2">
    <citation type="journal article" date="2003" name="Science">
        <title>Role of mobile DNA in the evolution of vancomycin-resistant Enterococcus faecalis.</title>
        <authorList>
            <person name="Paulsen I.T."/>
            <person name="Banerjei L."/>
            <person name="Myers G.S.A."/>
            <person name="Nelson K.E."/>
            <person name="Seshadri R."/>
            <person name="Read T.D."/>
            <person name="Fouts D.E."/>
            <person name="Eisen J.A."/>
            <person name="Gill S.R."/>
            <person name="Heidelberg J.F."/>
            <person name="Tettelin H."/>
            <person name="Dodson R.J."/>
            <person name="Umayam L.A."/>
            <person name="Brinkac L.M."/>
            <person name="Beanan M.J."/>
            <person name="Daugherty S.C."/>
            <person name="DeBoy R.T."/>
            <person name="Durkin S.A."/>
            <person name="Kolonay J.F."/>
            <person name="Madupu R."/>
            <person name="Nelson W.C."/>
            <person name="Vamathevan J.J."/>
            <person name="Tran B."/>
            <person name="Upton J."/>
            <person name="Hansen T."/>
            <person name="Shetty J."/>
            <person name="Khouri H.M."/>
            <person name="Utterback T.R."/>
            <person name="Radune D."/>
            <person name="Ketchum K.A."/>
            <person name="Dougherty B.A."/>
            <person name="Fraser C.M."/>
        </authorList>
    </citation>
    <scope>NUCLEOTIDE SEQUENCE [LARGE SCALE GENOMIC DNA]</scope>
    <source>
        <strain>ATCC 700802 / V583</strain>
    </source>
</reference>
<comment type="function">
    <text>Affects the expression of the receptor, named binding substance, that mediates mating aggregate formation. Could be a regulatory protein that suppresses the function or expression of ebsA and/or ebsMB.</text>
</comment>
<comment type="similarity">
    <text evidence="1">Belongs to the prolyl-tRNA editing family. YbaK/EbsC subfamily.</text>
</comment>
<evidence type="ECO:0000305" key="1"/>
<organism>
    <name type="scientific">Enterococcus faecalis (strain ATCC 700802 / V583)</name>
    <dbReference type="NCBI Taxonomy" id="226185"/>
    <lineage>
        <taxon>Bacteria</taxon>
        <taxon>Bacillati</taxon>
        <taxon>Bacillota</taxon>
        <taxon>Bacilli</taxon>
        <taxon>Lactobacillales</taxon>
        <taxon>Enterococcaceae</taxon>
        <taxon>Enterococcus</taxon>
    </lineage>
</organism>
<sequence length="164" mass="18057">MAKKKTQQKTNAMRMVEQHKVPYKEYEFAWSEDHLSAESVAESLGIEKGRIFKTLVTVGNKTGPVVAVIPGNQELDLKKLAKASGNKKVEMLHLKDLEATTGYIRGGCSPIGMKKQFPTYLAEEAQQYSAIIVSAGKRGMQIELAPEAILSLTNGQFAEITTKE</sequence>
<proteinExistence type="inferred from homology"/>
<name>EBSC_ENTFA</name>
<gene>
    <name type="ordered locus">EF_1730</name>
</gene>
<accession>P36922</accession>
<dbReference type="EC" id="4.2.-.-"/>
<dbReference type="EMBL" id="L23802">
    <property type="protein sequence ID" value="AAC36853.1"/>
    <property type="molecule type" value="Unassigned_DNA"/>
</dbReference>
<dbReference type="EMBL" id="AE016830">
    <property type="protein sequence ID" value="AAO81504.1"/>
    <property type="molecule type" value="Genomic_DNA"/>
</dbReference>
<dbReference type="PIR" id="C49939">
    <property type="entry name" value="C49939"/>
</dbReference>
<dbReference type="RefSeq" id="NP_815434.1">
    <property type="nucleotide sequence ID" value="NC_004668.1"/>
</dbReference>
<dbReference type="SMR" id="P36922"/>
<dbReference type="STRING" id="226185.EF_1730"/>
<dbReference type="EnsemblBacteria" id="AAO81504">
    <property type="protein sequence ID" value="AAO81504"/>
    <property type="gene ID" value="EF_1730"/>
</dbReference>
<dbReference type="KEGG" id="efa:EF1730"/>
<dbReference type="PATRIC" id="fig|226185.45.peg.1783"/>
<dbReference type="eggNOG" id="COG2606">
    <property type="taxonomic scope" value="Bacteria"/>
</dbReference>
<dbReference type="HOGENOM" id="CLU_094875_3_0_9"/>
<dbReference type="Proteomes" id="UP000001415">
    <property type="component" value="Chromosome"/>
</dbReference>
<dbReference type="GO" id="GO:0002161">
    <property type="term" value="F:aminoacyl-tRNA deacylase activity"/>
    <property type="evidence" value="ECO:0007669"/>
    <property type="project" value="InterPro"/>
</dbReference>
<dbReference type="GO" id="GO:0016829">
    <property type="term" value="F:lyase activity"/>
    <property type="evidence" value="ECO:0007669"/>
    <property type="project" value="UniProtKB-KW"/>
</dbReference>
<dbReference type="GO" id="GO:0006412">
    <property type="term" value="P:translation"/>
    <property type="evidence" value="ECO:0007669"/>
    <property type="project" value="UniProtKB-KW"/>
</dbReference>
<dbReference type="CDD" id="cd00002">
    <property type="entry name" value="YbaK_deacylase"/>
    <property type="match status" value="1"/>
</dbReference>
<dbReference type="Gene3D" id="3.90.960.10">
    <property type="entry name" value="YbaK/aminoacyl-tRNA synthetase-associated domain"/>
    <property type="match status" value="1"/>
</dbReference>
<dbReference type="InterPro" id="IPR004369">
    <property type="entry name" value="Prolyl-tRNA_editing_YbaK/EbsC"/>
</dbReference>
<dbReference type="InterPro" id="IPR036754">
    <property type="entry name" value="YbaK/aa-tRNA-synt-asso_dom_sf"/>
</dbReference>
<dbReference type="InterPro" id="IPR007214">
    <property type="entry name" value="YbaK/aa-tRNA-synth-assoc-dom"/>
</dbReference>
<dbReference type="NCBIfam" id="TIGR00011">
    <property type="entry name" value="YbaK_EbsC"/>
    <property type="match status" value="1"/>
</dbReference>
<dbReference type="PANTHER" id="PTHR30411:SF0">
    <property type="entry name" value="CYS-TRNA(PRO)_CYS-TRNA(CYS) DEACYLASE YBAK"/>
    <property type="match status" value="1"/>
</dbReference>
<dbReference type="PANTHER" id="PTHR30411">
    <property type="entry name" value="CYTOPLASMIC PROTEIN"/>
    <property type="match status" value="1"/>
</dbReference>
<dbReference type="Pfam" id="PF04073">
    <property type="entry name" value="tRNA_edit"/>
    <property type="match status" value="1"/>
</dbReference>
<dbReference type="PIRSF" id="PIRSF006181">
    <property type="entry name" value="EbsC_YbaK"/>
    <property type="match status" value="1"/>
</dbReference>
<dbReference type="SUPFAM" id="SSF55826">
    <property type="entry name" value="YbaK/ProRS associated domain"/>
    <property type="match status" value="1"/>
</dbReference>
<keyword id="KW-0456">Lyase</keyword>
<keyword id="KW-0648">Protein biosynthesis</keyword>
<keyword id="KW-1185">Reference proteome</keyword>
<keyword id="KW-0804">Transcription</keyword>
<keyword id="KW-0805">Transcription regulation</keyword>
<protein>
    <recommendedName>
        <fullName>Putative Cys-tRNA(Pro)/Cys-tRNA(Cys) deacylase EbsC</fullName>
        <ecNumber>4.2.-.-</ecNumber>
    </recommendedName>
    <alternativeName>
        <fullName>Protein EbsC</fullName>
    </alternativeName>
</protein>
<feature type="chain" id="PRO_0000086909" description="Putative Cys-tRNA(Pro)/Cys-tRNA(Cys) deacylase EbsC">
    <location>
        <begin position="1"/>
        <end position="164"/>
    </location>
</feature>
<feature type="sequence conflict" description="In Ref. 1; AAC36853." evidence="1" ref="1">
    <original>I</original>
    <variation>T</variation>
    <location>
        <position position="111"/>
    </location>
</feature>